<reference key="1">
    <citation type="journal article" date="1992" name="Plant Mol. Biol.">
        <title>Molecular characterization and expression of an isocitrate dehydrogenase from alfalfa (Medicago sativa L).</title>
        <authorList>
            <person name="Shorrosh B.S."/>
            <person name="Dixon R.A."/>
        </authorList>
    </citation>
    <scope>NUCLEOTIDE SEQUENCE [MRNA]</scope>
</reference>
<organism>
    <name type="scientific">Medicago sativa</name>
    <name type="common">Alfalfa</name>
    <dbReference type="NCBI Taxonomy" id="3879"/>
    <lineage>
        <taxon>Eukaryota</taxon>
        <taxon>Viridiplantae</taxon>
        <taxon>Streptophyta</taxon>
        <taxon>Embryophyta</taxon>
        <taxon>Tracheophyta</taxon>
        <taxon>Spermatophyta</taxon>
        <taxon>Magnoliopsida</taxon>
        <taxon>eudicotyledons</taxon>
        <taxon>Gunneridae</taxon>
        <taxon>Pentapetalae</taxon>
        <taxon>rosids</taxon>
        <taxon>fabids</taxon>
        <taxon>Fabales</taxon>
        <taxon>Fabaceae</taxon>
        <taxon>Papilionoideae</taxon>
        <taxon>50 kb inversion clade</taxon>
        <taxon>NPAAA clade</taxon>
        <taxon>Hologalegina</taxon>
        <taxon>IRL clade</taxon>
        <taxon>Trifolieae</taxon>
        <taxon>Medicago</taxon>
    </lineage>
</organism>
<dbReference type="EC" id="1.1.1.42"/>
<dbReference type="EMBL" id="M93672">
    <property type="protein sequence ID" value="AAA32656.1"/>
    <property type="molecule type" value="mRNA"/>
</dbReference>
<dbReference type="PIR" id="S28423">
    <property type="entry name" value="S28423"/>
</dbReference>
<dbReference type="PIR" id="T09619">
    <property type="entry name" value="T09619"/>
</dbReference>
<dbReference type="SMR" id="Q40345"/>
<dbReference type="GO" id="GO:0009507">
    <property type="term" value="C:chloroplast"/>
    <property type="evidence" value="ECO:0007669"/>
    <property type="project" value="UniProtKB-SubCell"/>
</dbReference>
<dbReference type="GO" id="GO:0005739">
    <property type="term" value="C:mitochondrion"/>
    <property type="evidence" value="ECO:0007669"/>
    <property type="project" value="TreeGrafter"/>
</dbReference>
<dbReference type="GO" id="GO:0004450">
    <property type="term" value="F:isocitrate dehydrogenase (NADP+) activity"/>
    <property type="evidence" value="ECO:0007669"/>
    <property type="project" value="UniProtKB-EC"/>
</dbReference>
<dbReference type="GO" id="GO:0000287">
    <property type="term" value="F:magnesium ion binding"/>
    <property type="evidence" value="ECO:0007669"/>
    <property type="project" value="InterPro"/>
</dbReference>
<dbReference type="GO" id="GO:0051287">
    <property type="term" value="F:NAD binding"/>
    <property type="evidence" value="ECO:0007669"/>
    <property type="project" value="InterPro"/>
</dbReference>
<dbReference type="GO" id="GO:0006097">
    <property type="term" value="P:glyoxylate cycle"/>
    <property type="evidence" value="ECO:0007669"/>
    <property type="project" value="UniProtKB-KW"/>
</dbReference>
<dbReference type="GO" id="GO:0006102">
    <property type="term" value="P:isocitrate metabolic process"/>
    <property type="evidence" value="ECO:0007669"/>
    <property type="project" value="InterPro"/>
</dbReference>
<dbReference type="GO" id="GO:0006739">
    <property type="term" value="P:NADP metabolic process"/>
    <property type="evidence" value="ECO:0007669"/>
    <property type="project" value="TreeGrafter"/>
</dbReference>
<dbReference type="GO" id="GO:0006099">
    <property type="term" value="P:tricarboxylic acid cycle"/>
    <property type="evidence" value="ECO:0007669"/>
    <property type="project" value="UniProtKB-KW"/>
</dbReference>
<dbReference type="FunFam" id="3.40.718.10:FF:000007">
    <property type="entry name" value="Isocitrate dehydrogenase [NADP]"/>
    <property type="match status" value="1"/>
</dbReference>
<dbReference type="Gene3D" id="3.40.718.10">
    <property type="entry name" value="Isopropylmalate Dehydrogenase"/>
    <property type="match status" value="1"/>
</dbReference>
<dbReference type="InterPro" id="IPR019818">
    <property type="entry name" value="IsoCit/isopropylmalate_DH_CS"/>
</dbReference>
<dbReference type="InterPro" id="IPR004790">
    <property type="entry name" value="Isocitrate_DH_NADP"/>
</dbReference>
<dbReference type="InterPro" id="IPR024084">
    <property type="entry name" value="IsoPropMal-DH-like_dom"/>
</dbReference>
<dbReference type="NCBIfam" id="TIGR00127">
    <property type="entry name" value="nadp_idh_euk"/>
    <property type="match status" value="1"/>
</dbReference>
<dbReference type="NCBIfam" id="NF006156">
    <property type="entry name" value="PRK08299.1"/>
    <property type="match status" value="1"/>
</dbReference>
<dbReference type="PANTHER" id="PTHR11822:SF21">
    <property type="entry name" value="ISOCITRATE DEHYDROGENASE [NADP], MITOCHONDRIAL"/>
    <property type="match status" value="1"/>
</dbReference>
<dbReference type="PANTHER" id="PTHR11822">
    <property type="entry name" value="NADP-SPECIFIC ISOCITRATE DEHYDROGENASE"/>
    <property type="match status" value="1"/>
</dbReference>
<dbReference type="Pfam" id="PF00180">
    <property type="entry name" value="Iso_dh"/>
    <property type="match status" value="1"/>
</dbReference>
<dbReference type="PIRSF" id="PIRSF000108">
    <property type="entry name" value="IDH_NADP"/>
    <property type="match status" value="1"/>
</dbReference>
<dbReference type="SMART" id="SM01329">
    <property type="entry name" value="Iso_dh"/>
    <property type="match status" value="1"/>
</dbReference>
<dbReference type="SUPFAM" id="SSF53659">
    <property type="entry name" value="Isocitrate/Isopropylmalate dehydrogenase-like"/>
    <property type="match status" value="1"/>
</dbReference>
<dbReference type="PROSITE" id="PS00470">
    <property type="entry name" value="IDH_IMDH"/>
    <property type="match status" value="1"/>
</dbReference>
<sequence length="433" mass="48383">QFSPNLSFSAFFPIITFTTATMGFQKIKVANPIVEMDGDEMTRIIWKYIKDKLIFPFVELDIKYFDLGLPYRDETNDKVTVESAEATLKYNVAIKCATITPDEARVKEFGLKSMWRSPNGTIRNILNGTVFREPIICKNIPRLIPGWTKPICIGRHAFGDQYRATDSVIKGPGKLKLVFVPEGQGETTDLEVYNFTGEGGVALAMYNTDESIRSFAEASMAVALEKKWPLYLSTKNTILKKYDGRFKDIFQEVYEAGWKSKYEAAGIWYEHRLIDDMVAYALKSEGGYVWACKNYDGDVQSDFLAQGFGSLGLMTSVLVCPDGKTIEAEAAHGTVTRHFRVHQKGGETSTNSIASIFAWTRGLAHRAKLDDNATLLDFTEKLEAACIGVVESGKMTKDLALILHGSKLSREHYLNTEEFIDAVAAELKTKISA</sequence>
<name>IDHP_MEDSA</name>
<keyword id="KW-0150">Chloroplast</keyword>
<keyword id="KW-0329">Glyoxylate bypass</keyword>
<keyword id="KW-0460">Magnesium</keyword>
<keyword id="KW-0464">Manganese</keyword>
<keyword id="KW-0479">Metal-binding</keyword>
<keyword id="KW-0521">NADP</keyword>
<keyword id="KW-0560">Oxidoreductase</keyword>
<keyword id="KW-0934">Plastid</keyword>
<keyword id="KW-0809">Transit peptide</keyword>
<keyword id="KW-0816">Tricarboxylic acid cycle</keyword>
<evidence type="ECO:0000250" key="1"/>
<evidence type="ECO:0000305" key="2"/>
<accession>Q40345</accession>
<feature type="transit peptide" description="Chloroplast" evidence="1">
    <location>
        <begin position="1" status="less than"/>
        <end position="21"/>
    </location>
</feature>
<feature type="chain" id="PRO_0000014427" description="Isocitrate dehydrogenase [NADP], chloroplastic">
    <location>
        <begin position="22"/>
        <end position="433"/>
    </location>
</feature>
<feature type="binding site" evidence="1">
    <location>
        <begin position="98"/>
        <end position="100"/>
    </location>
    <ligand>
        <name>NADP(+)</name>
        <dbReference type="ChEBI" id="CHEBI:58349"/>
    </ligand>
</feature>
<feature type="binding site" evidence="1">
    <location>
        <position position="100"/>
    </location>
    <ligand>
        <name>substrate</name>
    </ligand>
</feature>
<feature type="binding site" evidence="1">
    <location>
        <position position="105"/>
    </location>
    <ligand>
        <name>NADP(+)</name>
        <dbReference type="ChEBI" id="CHEBI:58349"/>
    </ligand>
</feature>
<feature type="binding site" evidence="1">
    <location>
        <begin position="117"/>
        <end position="123"/>
    </location>
    <ligand>
        <name>substrate</name>
    </ligand>
</feature>
<feature type="binding site" evidence="1">
    <location>
        <position position="132"/>
    </location>
    <ligand>
        <name>substrate</name>
    </ligand>
</feature>
<feature type="binding site" evidence="1">
    <location>
        <position position="155"/>
    </location>
    <ligand>
        <name>substrate</name>
    </ligand>
</feature>
<feature type="binding site" evidence="1">
    <location>
        <position position="275"/>
    </location>
    <ligand>
        <name>Mn(2+)</name>
        <dbReference type="ChEBI" id="CHEBI:29035"/>
    </ligand>
</feature>
<feature type="binding site" evidence="1">
    <location>
        <position position="283"/>
    </location>
    <ligand>
        <name>NADP(+)</name>
        <dbReference type="ChEBI" id="CHEBI:58349"/>
    </ligand>
</feature>
<feature type="binding site" evidence="1">
    <location>
        <position position="298"/>
    </location>
    <ligand>
        <name>Mn(2+)</name>
        <dbReference type="ChEBI" id="CHEBI:29035"/>
    </ligand>
</feature>
<feature type="binding site" evidence="1">
    <location>
        <begin position="333"/>
        <end position="338"/>
    </location>
    <ligand>
        <name>NADP(+)</name>
        <dbReference type="ChEBI" id="CHEBI:58349"/>
    </ligand>
</feature>
<feature type="binding site" evidence="1">
    <location>
        <position position="351"/>
    </location>
    <ligand>
        <name>NADP(+)</name>
        <dbReference type="ChEBI" id="CHEBI:58349"/>
    </ligand>
</feature>
<feature type="site" description="Critical for catalysis" evidence="1">
    <location>
        <position position="162"/>
    </location>
</feature>
<feature type="site" description="Critical for catalysis" evidence="1">
    <location>
        <position position="235"/>
    </location>
</feature>
<feature type="non-terminal residue">
    <location>
        <position position="1"/>
    </location>
</feature>
<comment type="catalytic activity">
    <reaction>
        <text>D-threo-isocitrate + NADP(+) = 2-oxoglutarate + CO2 + NADPH</text>
        <dbReference type="Rhea" id="RHEA:19629"/>
        <dbReference type="ChEBI" id="CHEBI:15562"/>
        <dbReference type="ChEBI" id="CHEBI:16526"/>
        <dbReference type="ChEBI" id="CHEBI:16810"/>
        <dbReference type="ChEBI" id="CHEBI:57783"/>
        <dbReference type="ChEBI" id="CHEBI:58349"/>
        <dbReference type="EC" id="1.1.1.42"/>
    </reaction>
</comment>
<comment type="cofactor">
    <cofactor evidence="1">
        <name>Mg(2+)</name>
        <dbReference type="ChEBI" id="CHEBI:18420"/>
    </cofactor>
    <cofactor evidence="1">
        <name>Mn(2+)</name>
        <dbReference type="ChEBI" id="CHEBI:29035"/>
    </cofactor>
    <text evidence="1">Binds 1 Mg(2+) or Mn(2+) ion per subunit.</text>
</comment>
<comment type="subcellular location">
    <subcellularLocation>
        <location evidence="2">Plastid</location>
        <location evidence="2">Chloroplast</location>
    </subcellularLocation>
</comment>
<comment type="tissue specificity">
    <text>Detected in all tissues examined.</text>
</comment>
<comment type="similarity">
    <text evidence="2">Belongs to the isocitrate and isopropylmalate dehydrogenases family.</text>
</comment>
<protein>
    <recommendedName>
        <fullName>Isocitrate dehydrogenase [NADP], chloroplastic</fullName>
        <shortName>IDH</shortName>
        <ecNumber>1.1.1.42</ecNumber>
    </recommendedName>
    <alternativeName>
        <fullName>IDP</fullName>
    </alternativeName>
    <alternativeName>
        <fullName>NADP(+)-specific ICDH</fullName>
    </alternativeName>
    <alternativeName>
        <fullName>Oxalosuccinate decarboxylase</fullName>
    </alternativeName>
</protein>
<proteinExistence type="evidence at transcript level"/>